<organism>
    <name type="scientific">Arabidopsis thaliana</name>
    <name type="common">Mouse-ear cress</name>
    <dbReference type="NCBI Taxonomy" id="3702"/>
    <lineage>
        <taxon>Eukaryota</taxon>
        <taxon>Viridiplantae</taxon>
        <taxon>Streptophyta</taxon>
        <taxon>Embryophyta</taxon>
        <taxon>Tracheophyta</taxon>
        <taxon>Spermatophyta</taxon>
        <taxon>Magnoliopsida</taxon>
        <taxon>eudicotyledons</taxon>
        <taxon>Gunneridae</taxon>
        <taxon>Pentapetalae</taxon>
        <taxon>rosids</taxon>
        <taxon>malvids</taxon>
        <taxon>Brassicales</taxon>
        <taxon>Brassicaceae</taxon>
        <taxon>Camelineae</taxon>
        <taxon>Arabidopsis</taxon>
    </lineage>
</organism>
<keyword id="KW-0963">Cytoplasm</keyword>
<keyword id="KW-0206">Cytoskeleton</keyword>
<keyword id="KW-1185">Reference proteome</keyword>
<name>TON1B_ARATH</name>
<accession>Q9FQ24</accession>
<accession>Q9FQ23</accession>
<accession>Q9SV48</accession>
<comment type="function">
    <text evidence="3">Involved in the control of the dynamic organization of the cortical cytoskeleton. May play a role in the organization of microtubule arrays at the centrosome through interaction with centrin 1 (CEN1).</text>
</comment>
<comment type="subunit">
    <text evidence="3 4">Interacts with CEN1, LNG1/TRM2 and LNG2/TRM1 (via C-terminus).</text>
</comment>
<comment type="subcellular location">
    <subcellularLocation>
        <location evidence="3 4">Cytoplasm</location>
    </subcellularLocation>
    <subcellularLocation>
        <location evidence="3 4">Cytoplasm</location>
        <location evidence="3 4">Cytoskeleton</location>
    </subcellularLocation>
    <text evidence="3 4">Localizes to cytoplasm and cortical cytoskeletal structures, including the preprophase band and the interphase microtubule arrays (PubMed:18757558). Recruited to cytoskeletal structures by LNG2/TRM1 (PubMed:22286137).</text>
</comment>
<comment type="disruption phenotype">
    <text evidence="3">Extreme defects in morphogenesis, positioning of mitotic planes and cellular organization due to dysfunction of the cortical cytoskeleton and absence of the preprophase band of microtubules. In the ton1 insertional mutant, the two highly similar genes in tandem, TON1A and TON1B are simultaneously disrupted.</text>
</comment>
<comment type="sequence caution" evidence="5">
    <conflict type="erroneous gene model prediction">
        <sequence resource="EMBL-CDS" id="CAB41084"/>
    </conflict>
</comment>
<evidence type="ECO:0000255" key="1">
    <source>
        <dbReference type="PROSITE-ProRule" id="PRU00126"/>
    </source>
</evidence>
<evidence type="ECO:0000256" key="2">
    <source>
        <dbReference type="SAM" id="MobiDB-lite"/>
    </source>
</evidence>
<evidence type="ECO:0000269" key="3">
    <source>
    </source>
</evidence>
<evidence type="ECO:0000269" key="4">
    <source>
    </source>
</evidence>
<evidence type="ECO:0000305" key="5"/>
<proteinExistence type="evidence at protein level"/>
<reference key="1">
    <citation type="journal article" date="2008" name="Plant Cell">
        <title>Arabidopsis TONNEAU1 proteins are essential for preprophase band formation and interact with centrin.</title>
        <authorList>
            <person name="Azimzadeh J."/>
            <person name="Nacry P."/>
            <person name="Christodoulidou A."/>
            <person name="Drevensek S."/>
            <person name="Camilleri C."/>
            <person name="Amiour N."/>
            <person name="Parcy F."/>
            <person name="Pastuglia M."/>
            <person name="Bouchez D."/>
        </authorList>
    </citation>
    <scope>NUCLEOTIDE SEQUENCE [GENOMIC DNA / MRNA]</scope>
    <scope>FUNCTION</scope>
    <scope>INTERACTION WITH CEN1</scope>
    <scope>SUBCELLULAR LOCATION</scope>
    <scope>DISRUPTION PHENOTYPE</scope>
    <source>
        <strain>cv. Columbia</strain>
    </source>
</reference>
<reference key="2">
    <citation type="journal article" date="2000" name="Nature">
        <title>Sequence and analysis of chromosome 3 of the plant Arabidopsis thaliana.</title>
        <authorList>
            <person name="Salanoubat M."/>
            <person name="Lemcke K."/>
            <person name="Rieger M."/>
            <person name="Ansorge W."/>
            <person name="Unseld M."/>
            <person name="Fartmann B."/>
            <person name="Valle G."/>
            <person name="Bloecker H."/>
            <person name="Perez-Alonso M."/>
            <person name="Obermaier B."/>
            <person name="Delseny M."/>
            <person name="Boutry M."/>
            <person name="Grivell L.A."/>
            <person name="Mache R."/>
            <person name="Puigdomenech P."/>
            <person name="De Simone V."/>
            <person name="Choisne N."/>
            <person name="Artiguenave F."/>
            <person name="Robert C."/>
            <person name="Brottier P."/>
            <person name="Wincker P."/>
            <person name="Cattolico L."/>
            <person name="Weissenbach J."/>
            <person name="Saurin W."/>
            <person name="Quetier F."/>
            <person name="Schaefer M."/>
            <person name="Mueller-Auer S."/>
            <person name="Gabel C."/>
            <person name="Fuchs M."/>
            <person name="Benes V."/>
            <person name="Wurmbach E."/>
            <person name="Drzonek H."/>
            <person name="Erfle H."/>
            <person name="Jordan N."/>
            <person name="Bangert S."/>
            <person name="Wiedelmann R."/>
            <person name="Kranz H."/>
            <person name="Voss H."/>
            <person name="Holland R."/>
            <person name="Brandt P."/>
            <person name="Nyakatura G."/>
            <person name="Vezzi A."/>
            <person name="D'Angelo M."/>
            <person name="Pallavicini A."/>
            <person name="Toppo S."/>
            <person name="Simionati B."/>
            <person name="Conrad A."/>
            <person name="Hornischer K."/>
            <person name="Kauer G."/>
            <person name="Loehnert T.-H."/>
            <person name="Nordsiek G."/>
            <person name="Reichelt J."/>
            <person name="Scharfe M."/>
            <person name="Schoen O."/>
            <person name="Bargues M."/>
            <person name="Terol J."/>
            <person name="Climent J."/>
            <person name="Navarro P."/>
            <person name="Collado C."/>
            <person name="Perez-Perez A."/>
            <person name="Ottenwaelder B."/>
            <person name="Duchemin D."/>
            <person name="Cooke R."/>
            <person name="Laudie M."/>
            <person name="Berger-Llauro C."/>
            <person name="Purnelle B."/>
            <person name="Masuy D."/>
            <person name="de Haan M."/>
            <person name="Maarse A.C."/>
            <person name="Alcaraz J.-P."/>
            <person name="Cottet A."/>
            <person name="Casacuberta E."/>
            <person name="Monfort A."/>
            <person name="Argiriou A."/>
            <person name="Flores M."/>
            <person name="Liguori R."/>
            <person name="Vitale D."/>
            <person name="Mannhaupt G."/>
            <person name="Haase D."/>
            <person name="Schoof H."/>
            <person name="Rudd S."/>
            <person name="Zaccaria P."/>
            <person name="Mewes H.-W."/>
            <person name="Mayer K.F.X."/>
            <person name="Kaul S."/>
            <person name="Town C.D."/>
            <person name="Koo H.L."/>
            <person name="Tallon L.J."/>
            <person name="Jenkins J."/>
            <person name="Rooney T."/>
            <person name="Rizzo M."/>
            <person name="Walts A."/>
            <person name="Utterback T."/>
            <person name="Fujii C.Y."/>
            <person name="Shea T.P."/>
            <person name="Creasy T.H."/>
            <person name="Haas B."/>
            <person name="Maiti R."/>
            <person name="Wu D."/>
            <person name="Peterson J."/>
            <person name="Van Aken S."/>
            <person name="Pai G."/>
            <person name="Militscher J."/>
            <person name="Sellers P."/>
            <person name="Gill J.E."/>
            <person name="Feldblyum T.V."/>
            <person name="Preuss D."/>
            <person name="Lin X."/>
            <person name="Nierman W.C."/>
            <person name="Salzberg S.L."/>
            <person name="White O."/>
            <person name="Venter J.C."/>
            <person name="Fraser C.M."/>
            <person name="Kaneko T."/>
            <person name="Nakamura Y."/>
            <person name="Sato S."/>
            <person name="Kato T."/>
            <person name="Asamizu E."/>
            <person name="Sasamoto S."/>
            <person name="Kimura T."/>
            <person name="Idesawa K."/>
            <person name="Kawashima K."/>
            <person name="Kishida Y."/>
            <person name="Kiyokawa C."/>
            <person name="Kohara M."/>
            <person name="Matsumoto M."/>
            <person name="Matsuno A."/>
            <person name="Muraki A."/>
            <person name="Nakayama S."/>
            <person name="Nakazaki N."/>
            <person name="Shinpo S."/>
            <person name="Takeuchi C."/>
            <person name="Wada T."/>
            <person name="Watanabe A."/>
            <person name="Yamada M."/>
            <person name="Yasuda M."/>
            <person name="Tabata S."/>
        </authorList>
    </citation>
    <scope>NUCLEOTIDE SEQUENCE [LARGE SCALE GENOMIC DNA]</scope>
    <source>
        <strain>cv. Columbia</strain>
    </source>
</reference>
<reference key="3">
    <citation type="journal article" date="2017" name="Plant J.">
        <title>Araport11: a complete reannotation of the Arabidopsis thaliana reference genome.</title>
        <authorList>
            <person name="Cheng C.Y."/>
            <person name="Krishnakumar V."/>
            <person name="Chan A.P."/>
            <person name="Thibaud-Nissen F."/>
            <person name="Schobel S."/>
            <person name="Town C.D."/>
        </authorList>
    </citation>
    <scope>GENOME REANNOTATION</scope>
    <source>
        <strain>cv. Columbia</strain>
    </source>
</reference>
<reference key="4">
    <citation type="journal article" date="2003" name="Science">
        <title>Empirical analysis of transcriptional activity in the Arabidopsis genome.</title>
        <authorList>
            <person name="Yamada K."/>
            <person name="Lim J."/>
            <person name="Dale J.M."/>
            <person name="Chen H."/>
            <person name="Shinn P."/>
            <person name="Palm C.J."/>
            <person name="Southwick A.M."/>
            <person name="Wu H.C."/>
            <person name="Kim C.J."/>
            <person name="Nguyen M."/>
            <person name="Pham P.K."/>
            <person name="Cheuk R.F."/>
            <person name="Karlin-Newmann G."/>
            <person name="Liu S.X."/>
            <person name="Lam B."/>
            <person name="Sakano H."/>
            <person name="Wu T."/>
            <person name="Yu G."/>
            <person name="Miranda M."/>
            <person name="Quach H.L."/>
            <person name="Tripp M."/>
            <person name="Chang C.H."/>
            <person name="Lee J.M."/>
            <person name="Toriumi M.J."/>
            <person name="Chan M.M."/>
            <person name="Tang C.C."/>
            <person name="Onodera C.S."/>
            <person name="Deng J.M."/>
            <person name="Akiyama K."/>
            <person name="Ansari Y."/>
            <person name="Arakawa T."/>
            <person name="Banh J."/>
            <person name="Banno F."/>
            <person name="Bowser L."/>
            <person name="Brooks S.Y."/>
            <person name="Carninci P."/>
            <person name="Chao Q."/>
            <person name="Choy N."/>
            <person name="Enju A."/>
            <person name="Goldsmith A.D."/>
            <person name="Gurjal M."/>
            <person name="Hansen N.F."/>
            <person name="Hayashizaki Y."/>
            <person name="Johnson-Hopson C."/>
            <person name="Hsuan V.W."/>
            <person name="Iida K."/>
            <person name="Karnes M."/>
            <person name="Khan S."/>
            <person name="Koesema E."/>
            <person name="Ishida J."/>
            <person name="Jiang P.X."/>
            <person name="Jones T."/>
            <person name="Kawai J."/>
            <person name="Kamiya A."/>
            <person name="Meyers C."/>
            <person name="Nakajima M."/>
            <person name="Narusaka M."/>
            <person name="Seki M."/>
            <person name="Sakurai T."/>
            <person name="Satou M."/>
            <person name="Tamse R."/>
            <person name="Vaysberg M."/>
            <person name="Wallender E.K."/>
            <person name="Wong C."/>
            <person name="Yamamura Y."/>
            <person name="Yuan S."/>
            <person name="Shinozaki K."/>
            <person name="Davis R.W."/>
            <person name="Theologis A."/>
            <person name="Ecker J.R."/>
        </authorList>
    </citation>
    <scope>NUCLEOTIDE SEQUENCE [LARGE SCALE MRNA]</scope>
    <source>
        <strain>cv. Columbia</strain>
    </source>
</reference>
<reference key="5">
    <citation type="journal article" date="2012" name="Plant Cell">
        <title>The Arabidopsis TRM1-TON1 interaction reveals a recruitment network common to plant cortical microtubule arrays and eukaryotic centrosomes.</title>
        <authorList>
            <person name="Drevensek S."/>
            <person name="Goussot M."/>
            <person name="Duroc Y."/>
            <person name="Christodoulidou A."/>
            <person name="Steyaert S."/>
            <person name="Schaefer E."/>
            <person name="Duvernois E."/>
            <person name="Grandjean O."/>
            <person name="Vantard M."/>
            <person name="Bouchez D."/>
            <person name="Pastuglia M."/>
        </authorList>
    </citation>
    <scope>INTERACTION WITH LNG1 AND LNG2</scope>
    <scope>SUBCELLULAR LOCATION</scope>
</reference>
<sequence length="257" mass="29185">MDDYTREMMDLKTLVTRTLEKKGVLAKIRAELRASVFEAIEEEDRVIENNEGLPPALLGSCNDRARQLHASPSGRLLSALICEYLDWAQLNHTLKVYQPECNSAKDSWKSEIRDFSINNGYELNRNEDSRPLLLDVLEGFLKFENMTQVMGGSSRRESETESSLSLDTRNPPRRSSASDSLPHQRRSVSASQASGAATSGYRKDESNWRYDTEDMPEEVMRASTALENLQLDRKTRNLTSSWRNVKDGTSEEEEGKD</sequence>
<protein>
    <recommendedName>
        <fullName>Protein TONNEAU 1b</fullName>
    </recommendedName>
</protein>
<dbReference type="EMBL" id="AF280058">
    <property type="protein sequence ID" value="AAG35780.1"/>
    <property type="molecule type" value="Genomic_DNA"/>
</dbReference>
<dbReference type="EMBL" id="AF280059">
    <property type="protein sequence ID" value="AAG35781.1"/>
    <property type="molecule type" value="mRNA"/>
</dbReference>
<dbReference type="EMBL" id="AL049655">
    <property type="protein sequence ID" value="CAB41084.1"/>
    <property type="status" value="ALT_SEQ"/>
    <property type="molecule type" value="Genomic_DNA"/>
</dbReference>
<dbReference type="EMBL" id="CP002686">
    <property type="protein sequence ID" value="AEE79326.1"/>
    <property type="molecule type" value="Genomic_DNA"/>
</dbReference>
<dbReference type="EMBL" id="AY075696">
    <property type="protein sequence ID" value="AAL77702.1"/>
    <property type="molecule type" value="mRNA"/>
</dbReference>
<dbReference type="PIR" id="T06720">
    <property type="entry name" value="T06720"/>
</dbReference>
<dbReference type="RefSeq" id="NP_567013.1">
    <property type="nucleotide sequence ID" value="NM_115358.5"/>
</dbReference>
<dbReference type="SMR" id="Q9FQ24"/>
<dbReference type="BioGRID" id="9982">
    <property type="interactions" value="3"/>
</dbReference>
<dbReference type="FunCoup" id="Q9FQ24">
    <property type="interactions" value="1992"/>
</dbReference>
<dbReference type="STRING" id="3702.Q9FQ24"/>
<dbReference type="iPTMnet" id="Q9FQ24"/>
<dbReference type="PaxDb" id="3702-AT3G55005.1"/>
<dbReference type="ProteomicsDB" id="232437"/>
<dbReference type="EnsemblPlants" id="AT3G55005.1">
    <property type="protein sequence ID" value="AT3G55005.1"/>
    <property type="gene ID" value="AT3G55005"/>
</dbReference>
<dbReference type="GeneID" id="824666"/>
<dbReference type="Gramene" id="AT3G55005.1">
    <property type="protein sequence ID" value="AT3G55005.1"/>
    <property type="gene ID" value="AT3G55005"/>
</dbReference>
<dbReference type="KEGG" id="ath:AT3G55005"/>
<dbReference type="Araport" id="AT3G55005"/>
<dbReference type="TAIR" id="AT3G55005">
    <property type="gene designation" value="TON1B"/>
</dbReference>
<dbReference type="eggNOG" id="ENOG502QRFJ">
    <property type="taxonomic scope" value="Eukaryota"/>
</dbReference>
<dbReference type="HOGENOM" id="CLU_071412_0_0_1"/>
<dbReference type="InParanoid" id="Q9FQ24"/>
<dbReference type="OMA" id="WRYENEE"/>
<dbReference type="PhylomeDB" id="Q9FQ24"/>
<dbReference type="PRO" id="PR:Q9FQ24"/>
<dbReference type="Proteomes" id="UP000006548">
    <property type="component" value="Chromosome 3"/>
</dbReference>
<dbReference type="ExpressionAtlas" id="Q9FQ24">
    <property type="expression patterns" value="baseline and differential"/>
</dbReference>
<dbReference type="GO" id="GO:0030981">
    <property type="term" value="C:cortical microtubule cytoskeleton"/>
    <property type="evidence" value="ECO:0000314"/>
    <property type="project" value="UniProtKB"/>
</dbReference>
<dbReference type="GO" id="GO:0005737">
    <property type="term" value="C:cytoplasm"/>
    <property type="evidence" value="ECO:0000314"/>
    <property type="project" value="UniProtKB"/>
</dbReference>
<dbReference type="GO" id="GO:0030865">
    <property type="term" value="P:cortical cytoskeleton organization"/>
    <property type="evidence" value="ECO:0000315"/>
    <property type="project" value="UniProtKB"/>
</dbReference>
<dbReference type="GO" id="GO:0000226">
    <property type="term" value="P:microtubule cytoskeleton organization"/>
    <property type="evidence" value="ECO:0000315"/>
    <property type="project" value="UniProtKB"/>
</dbReference>
<dbReference type="GO" id="GO:0000913">
    <property type="term" value="P:preprophase band assembly"/>
    <property type="evidence" value="ECO:0000315"/>
    <property type="project" value="UniProtKB"/>
</dbReference>
<dbReference type="Gene3D" id="1.20.960.40">
    <property type="match status" value="1"/>
</dbReference>
<dbReference type="InterPro" id="IPR006594">
    <property type="entry name" value="LisH"/>
</dbReference>
<dbReference type="PANTHER" id="PTHR15431">
    <property type="entry name" value="FGFR1 ONCOGENE PARTNER/LISH DOMAIN-CONTAINING PROTEIN"/>
    <property type="match status" value="1"/>
</dbReference>
<dbReference type="PANTHER" id="PTHR15431:SF4">
    <property type="entry name" value="PROTEIN TONNEAU 1B"/>
    <property type="match status" value="1"/>
</dbReference>
<dbReference type="Pfam" id="PF16045">
    <property type="entry name" value="LisH_2"/>
    <property type="match status" value="1"/>
</dbReference>
<dbReference type="PROSITE" id="PS50896">
    <property type="entry name" value="LISH"/>
    <property type="match status" value="1"/>
</dbReference>
<feature type="chain" id="PRO_0000420917" description="Protein TONNEAU 1b">
    <location>
        <begin position="1"/>
        <end position="257"/>
    </location>
</feature>
<feature type="domain" description="LisH" evidence="1">
    <location>
        <begin position="73"/>
        <end position="105"/>
    </location>
</feature>
<feature type="region of interest" description="Disordered" evidence="2">
    <location>
        <begin position="148"/>
        <end position="216"/>
    </location>
</feature>
<feature type="region of interest" description="Disordered" evidence="2">
    <location>
        <begin position="231"/>
        <end position="257"/>
    </location>
</feature>
<feature type="compositionally biased region" description="Low complexity" evidence="2">
    <location>
        <begin position="187"/>
        <end position="199"/>
    </location>
</feature>
<feature type="compositionally biased region" description="Basic and acidic residues" evidence="2">
    <location>
        <begin position="201"/>
        <end position="212"/>
    </location>
</feature>
<feature type="compositionally biased region" description="Basic and acidic residues" evidence="2">
    <location>
        <begin position="244"/>
        <end position="257"/>
    </location>
</feature>
<feature type="sequence conflict" description="In Ref. 1; AEE79326." evidence="5" ref="1">
    <original>L</original>
    <variation>S</variation>
    <location>
        <position position="164"/>
    </location>
</feature>
<feature type="sequence conflict" description="In Ref. 1; AEE79326." evidence="5" ref="1">
    <location>
        <begin position="190"/>
        <end position="192"/>
    </location>
</feature>
<gene>
    <name type="primary">TON1B</name>
    <name type="ordered locus">At3g55005</name>
    <name type="ORF">F28P10.20</name>
</gene>